<sequence length="524" mass="58583">MVPQVLLFAPLLVFPLCFGKFPIYTIPDKLGPWSPIDLHHLSCPNNLVVEDEGCTNLSGFSYMELKVGYISAIKVNGFTCTGVVTEAETYTNFVGYVTTTFKRKHFRPTPDACRAAYNWKMAGDPRYEESLHNPYPDYHWLRTVKTTKESLVIISPSVTDLDPYDKSLHSRVFPGGNCSGITVSSTYCSTNHDYTIWMPENLRLGTSCDIFTHSRGKRASKGDKTCGFVDERGLYKSLKGACKLKLCGVLGLRLMDGTWVAMQTSDETKWCPPGQLVNLHDFRSDEIEHLVEEELVKKREECLDALESIMTTKSVSFRRLSHLRKLVPGFGKAYTIFNKTLMEADAHYKSVQTWNEIIPSKGCLRVGERCHPHVNGVFFNGIILGSDGHVLIPEMQSSLLQQHMELLESSVIPLMHPLADPSTVFKDGDEVEDFVEVHLPDVHKQVSGVDLGLPKWGKYVLMIAGALIALMLIIFLMTCCRRVNRPESTQSNLGGTGRNVSVPSQSGKVISSWESYKSGGETRL</sequence>
<comment type="function">
    <text evidence="1 2">Attaches the virus to host cellular receptor, inducing endocytosis of the virion by using different host proteins including TFRC, GRM2 and ITGB1 (By similarity). In the endosome, the acidic pH induces conformational changes in the glycoprotein trimer, which trigger fusion between virus and cell membrane. There is convincing in vitro evidence that the muscular form of the nicotinic acetylcholine receptor (nAChR), the neuronal cell adhesion molecule (NCAM), and the p75 neurotrophin receptor (p75NTR) bind glycoprotein and thereby facilitate rabies virus entry into cells (By similarity).</text>
</comment>
<comment type="subunit">
    <text evidence="1 2">Homotrimer (By similarity). Interacts with matrix protein (By similarity). Interacts with host TRFC. Interacts with host BST2; this interaction inhibits viral budding by tethering new virions to the cell surface. Interacts with ITGB1. Interacts with host GRM2 (By similarity).</text>
</comment>
<comment type="subcellular location">
    <subcellularLocation>
        <location evidence="5">Virion membrane</location>
        <topology evidence="5">Single-pass type I membrane protein</topology>
    </subcellularLocation>
</comment>
<comment type="PTM">
    <text evidence="1">Glycosylated and palmitoylated by host. Glycosylation is crucial for glycoprotein export at the cell surface (By similarity).</text>
</comment>
<comment type="biotechnology">
    <text>Primary surface antigen capable of inducing and reacting with virus-neutralizing antibodies. Almost all human and veterinary vaccines are based on the functional aspects of the G protein.</text>
</comment>
<comment type="miscellaneous">
    <text evidence="1">Arg-352 is highly involved in rabies virus pathogenicity. Its mutation dramatically attenuates the virus (By similarity).</text>
</comment>
<comment type="similarity">
    <text evidence="5">Belongs to the lyssavirus glycoprotein family.</text>
</comment>
<gene>
    <name type="primary">G</name>
</gene>
<proteinExistence type="evidence at protein level"/>
<organismHost>
    <name type="scientific">Homo sapiens</name>
    <name type="common">Human</name>
    <dbReference type="NCBI Taxonomy" id="9606"/>
</organismHost>
<organismHost>
    <name type="scientific">Mammalia</name>
    <dbReference type="NCBI Taxonomy" id="40674"/>
</organismHost>
<keyword id="KW-1015">Disulfide bond</keyword>
<keyword id="KW-0325">Glycoprotein</keyword>
<keyword id="KW-0449">Lipoprotein</keyword>
<keyword id="KW-0472">Membrane</keyword>
<keyword id="KW-0564">Palmitate</keyword>
<keyword id="KW-0732">Signal</keyword>
<keyword id="KW-0812">Transmembrane</keyword>
<keyword id="KW-1133">Transmembrane helix</keyword>
<keyword id="KW-0261">Viral envelope protein</keyword>
<keyword id="KW-0946">Virion</keyword>
<reference key="1">
    <citation type="journal article" date="1989" name="Virology">
        <title>Structure and transcription of the glycoprotein gene of attenuated HEP-Flury strain of rabies virus.</title>
        <authorList>
            <person name="Morimoto K."/>
            <person name="Ohkubo A."/>
            <person name="Kawai A."/>
        </authorList>
    </citation>
    <scope>NUCLEOTIDE SEQUENCE [GENOMIC RNA]</scope>
</reference>
<reference key="2">
    <citation type="journal article" date="2003" name="J. Virol. Methods">
        <title>An improved method for recovering rabies virus from cloned cDNA.</title>
        <authorList>
            <person name="Inoue K."/>
            <person name="Shoji Y."/>
            <person name="Kurane I."/>
            <person name="Iijima T."/>
            <person name="Sakai T."/>
            <person name="Morimoto K."/>
        </authorList>
    </citation>
    <scope>NUCLEOTIDE SEQUENCE [GENOMIC RNA]</scope>
    <source>
        <strain>HEP-Flury 2003</strain>
    </source>
</reference>
<dbReference type="EMBL" id="M32751">
    <property type="protein sequence ID" value="AAA47213.1"/>
    <property type="molecule type" value="Genomic_RNA"/>
</dbReference>
<dbReference type="EMBL" id="AB085828">
    <property type="protein sequence ID" value="BAC53868.1"/>
    <property type="molecule type" value="Genomic_RNA"/>
</dbReference>
<dbReference type="PIR" id="A33745">
    <property type="entry name" value="VGVNRB"/>
</dbReference>
<dbReference type="SMR" id="P19462"/>
<dbReference type="GlyCosmos" id="P19462">
    <property type="glycosylation" value="3 sites, No reported glycans"/>
</dbReference>
<dbReference type="ABCD" id="P19462">
    <property type="antibodies" value="1 sequenced antibody"/>
</dbReference>
<dbReference type="Proteomes" id="UP000006846">
    <property type="component" value="Genome"/>
</dbReference>
<dbReference type="GO" id="GO:0016020">
    <property type="term" value="C:membrane"/>
    <property type="evidence" value="ECO:0007669"/>
    <property type="project" value="UniProtKB-KW"/>
</dbReference>
<dbReference type="GO" id="GO:0019031">
    <property type="term" value="C:viral envelope"/>
    <property type="evidence" value="ECO:0007669"/>
    <property type="project" value="UniProtKB-KW"/>
</dbReference>
<dbReference type="GO" id="GO:0036338">
    <property type="term" value="C:viral membrane"/>
    <property type="evidence" value="ECO:0000250"/>
    <property type="project" value="UniProtKB"/>
</dbReference>
<dbReference type="GO" id="GO:0055036">
    <property type="term" value="C:virion membrane"/>
    <property type="evidence" value="ECO:0007669"/>
    <property type="project" value="UniProtKB-SubCell"/>
</dbReference>
<dbReference type="GO" id="GO:0098670">
    <property type="term" value="P:entry receptor-mediated virion attachment to host cell"/>
    <property type="evidence" value="ECO:0000250"/>
    <property type="project" value="UniProtKB"/>
</dbReference>
<dbReference type="GO" id="GO:0039654">
    <property type="term" value="P:fusion of virus membrane with host endosome membrane"/>
    <property type="evidence" value="ECO:0000250"/>
    <property type="project" value="UniProtKB"/>
</dbReference>
<dbReference type="Gene3D" id="2.30.29.130">
    <property type="match status" value="1"/>
</dbReference>
<dbReference type="InterPro" id="IPR055448">
    <property type="entry name" value="PH_Rhabdo_glycop"/>
</dbReference>
<dbReference type="InterPro" id="IPR055447">
    <property type="entry name" value="Rhabdo_glycop_CD"/>
</dbReference>
<dbReference type="InterPro" id="IPR001903">
    <property type="entry name" value="Rhabdo_glycop_FD"/>
</dbReference>
<dbReference type="Pfam" id="PF24834">
    <property type="entry name" value="PH_Rhabdo_glycop"/>
    <property type="match status" value="1"/>
</dbReference>
<dbReference type="Pfam" id="PF24833">
    <property type="entry name" value="Rhabdo_glycop_CD"/>
    <property type="match status" value="1"/>
</dbReference>
<dbReference type="Pfam" id="PF00974">
    <property type="entry name" value="Rhabdo_glycop_FD"/>
    <property type="match status" value="1"/>
</dbReference>
<dbReference type="SUPFAM" id="SSF161008">
    <property type="entry name" value="Viral glycoprotein ectodomain-like"/>
    <property type="match status" value="1"/>
</dbReference>
<organism>
    <name type="scientific">Rabies virus (strain HEP-Flury)</name>
    <name type="common">RABV</name>
    <dbReference type="NCBI Taxonomy" id="11296"/>
    <lineage>
        <taxon>Viruses</taxon>
        <taxon>Riboviria</taxon>
        <taxon>Orthornavirae</taxon>
        <taxon>Negarnaviricota</taxon>
        <taxon>Haploviricotina</taxon>
        <taxon>Monjiviricetes</taxon>
        <taxon>Mononegavirales</taxon>
        <taxon>Rhabdoviridae</taxon>
        <taxon>Alpharhabdovirinae</taxon>
        <taxon>Lyssavirus</taxon>
        <taxon>Lyssavirus rabies</taxon>
    </lineage>
</organism>
<accession>P19462</accession>
<accession>Q8B6J6</accession>
<name>GLYCO_RABVH</name>
<feature type="signal peptide">
    <location>
        <begin position="1"/>
        <end position="19"/>
    </location>
</feature>
<feature type="chain" id="PRO_0000040994" description="Glycoprotein">
    <location>
        <begin position="20"/>
        <end position="524"/>
    </location>
</feature>
<feature type="topological domain" description="Virion surface" evidence="3">
    <location>
        <begin position="20"/>
        <end position="459"/>
    </location>
</feature>
<feature type="transmembrane region" description="Helical" evidence="3">
    <location>
        <begin position="460"/>
        <end position="480"/>
    </location>
</feature>
<feature type="topological domain" description="Intravirion" evidence="3">
    <location>
        <begin position="481"/>
        <end position="524"/>
    </location>
</feature>
<feature type="region of interest" description="Disordered" evidence="4">
    <location>
        <begin position="487"/>
        <end position="506"/>
    </location>
</feature>
<feature type="lipid moiety-binding region" description="S-palmitoyl cysteine; by host" evidence="1">
    <location>
        <position position="480"/>
    </location>
</feature>
<feature type="glycosylation site" description="N-linked (GlcNAc...) asparagine; by host" evidence="1">
    <location>
        <position position="56"/>
    </location>
</feature>
<feature type="glycosylation site" description="N-linked (GlcNAc...) asparagine; by host" evidence="3">
    <location>
        <position position="177"/>
    </location>
</feature>
<feature type="glycosylation site" description="N-linked (GlcNAc...) asparagine; by host" evidence="1">
    <location>
        <position position="338"/>
    </location>
</feature>
<feature type="disulfide bond" evidence="2">
    <location>
        <begin position="43"/>
        <end position="302"/>
    </location>
</feature>
<feature type="disulfide bond" evidence="2">
    <location>
        <begin position="54"/>
        <end position="226"/>
    </location>
</feature>
<feature type="disulfide bond" evidence="2">
    <location>
        <begin position="80"/>
        <end position="113"/>
    </location>
</feature>
<feature type="disulfide bond" evidence="2">
    <location>
        <begin position="178"/>
        <end position="188"/>
    </location>
</feature>
<feature type="disulfide bond" evidence="2">
    <location>
        <begin position="208"/>
        <end position="247"/>
    </location>
</feature>
<feature type="disulfide bond" evidence="2">
    <location>
        <begin position="242"/>
        <end position="271"/>
    </location>
</feature>
<feature type="disulfide bond" evidence="2">
    <location>
        <begin position="363"/>
        <end position="370"/>
    </location>
</feature>
<feature type="sequence variant" description="In strain: HEP-Flury 2003.">
    <original>F</original>
    <variation>S</variation>
    <location>
        <position position="14"/>
    </location>
</feature>
<protein>
    <recommendedName>
        <fullName>Glycoprotein</fullName>
    </recommendedName>
</protein>
<evidence type="ECO:0000250" key="1"/>
<evidence type="ECO:0000250" key="2">
    <source>
        <dbReference type="UniProtKB" id="P08667"/>
    </source>
</evidence>
<evidence type="ECO:0000255" key="3"/>
<evidence type="ECO:0000256" key="4">
    <source>
        <dbReference type="SAM" id="MobiDB-lite"/>
    </source>
</evidence>
<evidence type="ECO:0000305" key="5"/>